<accession>Q49YV0</accession>
<keyword id="KW-0444">Lipid biosynthesis</keyword>
<keyword id="KW-0443">Lipid metabolism</keyword>
<keyword id="KW-0460">Magnesium</keyword>
<keyword id="KW-0479">Metal-binding</keyword>
<keyword id="KW-0594">Phospholipid biosynthesis</keyword>
<keyword id="KW-1208">Phospholipid metabolism</keyword>
<keyword id="KW-1185">Reference proteome</keyword>
<keyword id="KW-0808">Transferase</keyword>
<organism>
    <name type="scientific">Staphylococcus saprophyticus subsp. saprophyticus (strain ATCC 15305 / DSM 20229 / NCIMB 8711 / NCTC 7292 / S-41)</name>
    <dbReference type="NCBI Taxonomy" id="342451"/>
    <lineage>
        <taxon>Bacteria</taxon>
        <taxon>Bacillati</taxon>
        <taxon>Bacillota</taxon>
        <taxon>Bacilli</taxon>
        <taxon>Bacillales</taxon>
        <taxon>Staphylococcaceae</taxon>
        <taxon>Staphylococcus</taxon>
    </lineage>
</organism>
<gene>
    <name evidence="1" type="primary">pcrB</name>
    <name type="ordered locus">SSP0885</name>
</gene>
<name>PCRB_STAS1</name>
<proteinExistence type="inferred from homology"/>
<comment type="function">
    <text evidence="1">Prenyltransferase that catalyzes in vivo the transfer of the heptaprenyl moiety of heptaprenyl pyrophosphate (HepPP; 35 carbon atoms) to the C3 hydroxyl of sn-glycerol-1-phosphate (G1P), producing heptaprenylglyceryl phosphate (HepGP). This reaction is an ether-bond-formation step in the biosynthesis of archaea-type G1P-based membrane lipids found in Bacillales.</text>
</comment>
<comment type="catalytic activity">
    <reaction evidence="1">
        <text>sn-glycerol 1-phosphate + all-trans-heptaprenyl diphosphate = 3-heptaprenyl-sn-glycero-1-phosphate + diphosphate</text>
        <dbReference type="Rhea" id="RHEA:33495"/>
        <dbReference type="ChEBI" id="CHEBI:33019"/>
        <dbReference type="ChEBI" id="CHEBI:57685"/>
        <dbReference type="ChEBI" id="CHEBI:58206"/>
        <dbReference type="ChEBI" id="CHEBI:64781"/>
        <dbReference type="EC" id="2.5.1.n9"/>
    </reaction>
</comment>
<comment type="cofactor">
    <cofactor evidence="1">
        <name>Mg(2+)</name>
        <dbReference type="ChEBI" id="CHEBI:18420"/>
    </cofactor>
</comment>
<comment type="pathway">
    <text evidence="1">Membrane lipid metabolism; glycerophospholipid metabolism.</text>
</comment>
<comment type="subunit">
    <text evidence="1">Homodimer.</text>
</comment>
<comment type="similarity">
    <text evidence="1">Belongs to the GGGP/HepGP synthase family. Group I subfamily.</text>
</comment>
<sequence>MTDMNKWRHIFKLDPAKPISDEDLMKICTSDTDAIMIGGTDDITEENVAHLMHKVKCYSLPIVLEISNLESVVPGFDLYFIPTVLNSRDVKYHNGLLLEALKSYGTLIDFNEVVFEGYVVLNPDCKVAKLTQADTMIDDEDIEAYAQMINDMYQLPVMYIEYSGVYGETNLVKAAADMLTETQLFYGGGISNYEEAEMMASIADTIIVGNIIYEDINKALKTVKVKETH</sequence>
<protein>
    <recommendedName>
        <fullName evidence="1">Heptaprenylglyceryl phosphate synthase</fullName>
        <shortName evidence="1">HepGP synthase</shortName>
        <ecNumber evidence="1">2.5.1.n9</ecNumber>
    </recommendedName>
    <alternativeName>
        <fullName evidence="1">Glycerol-1-phosphate heptaprenyltransferase</fullName>
    </alternativeName>
</protein>
<evidence type="ECO:0000255" key="1">
    <source>
        <dbReference type="HAMAP-Rule" id="MF_00112"/>
    </source>
</evidence>
<dbReference type="EC" id="2.5.1.n9" evidence="1"/>
<dbReference type="EMBL" id="AP008934">
    <property type="protein sequence ID" value="BAE18030.1"/>
    <property type="molecule type" value="Genomic_DNA"/>
</dbReference>
<dbReference type="RefSeq" id="WP_011302762.1">
    <property type="nucleotide sequence ID" value="NZ_MTGA01000031.1"/>
</dbReference>
<dbReference type="SMR" id="Q49YV0"/>
<dbReference type="KEGG" id="ssp:SSP0885"/>
<dbReference type="eggNOG" id="COG1646">
    <property type="taxonomic scope" value="Bacteria"/>
</dbReference>
<dbReference type="HOGENOM" id="CLU_095211_0_0_9"/>
<dbReference type="OrthoDB" id="2381757at2"/>
<dbReference type="UniPathway" id="UPA00940"/>
<dbReference type="Proteomes" id="UP000006371">
    <property type="component" value="Chromosome"/>
</dbReference>
<dbReference type="GO" id="GO:0120536">
    <property type="term" value="F:heptaprenylglyceryl phosphate synthase activity"/>
    <property type="evidence" value="ECO:0007669"/>
    <property type="project" value="RHEA"/>
</dbReference>
<dbReference type="GO" id="GO:0000287">
    <property type="term" value="F:magnesium ion binding"/>
    <property type="evidence" value="ECO:0007669"/>
    <property type="project" value="UniProtKB-UniRule"/>
</dbReference>
<dbReference type="GO" id="GO:0046474">
    <property type="term" value="P:glycerophospholipid biosynthetic process"/>
    <property type="evidence" value="ECO:0007669"/>
    <property type="project" value="UniProtKB-UniRule"/>
</dbReference>
<dbReference type="CDD" id="cd02812">
    <property type="entry name" value="PcrB_like"/>
    <property type="match status" value="1"/>
</dbReference>
<dbReference type="FunFam" id="3.20.20.390:FF:000001">
    <property type="entry name" value="Heptaprenylglyceryl phosphate synthase"/>
    <property type="match status" value="1"/>
</dbReference>
<dbReference type="Gene3D" id="3.20.20.390">
    <property type="entry name" value="FMN-linked oxidoreductases"/>
    <property type="match status" value="1"/>
</dbReference>
<dbReference type="HAMAP" id="MF_00112">
    <property type="entry name" value="GGGP_HepGP_synthase"/>
    <property type="match status" value="1"/>
</dbReference>
<dbReference type="InterPro" id="IPR039074">
    <property type="entry name" value="GGGP/HepGP_synthase_I"/>
</dbReference>
<dbReference type="InterPro" id="IPR038597">
    <property type="entry name" value="GGGP/HepGP_synthase_sf"/>
</dbReference>
<dbReference type="InterPro" id="IPR008205">
    <property type="entry name" value="GGGP_HepGP_synthase"/>
</dbReference>
<dbReference type="NCBIfam" id="TIGR01768">
    <property type="entry name" value="GGGP-family"/>
    <property type="match status" value="1"/>
</dbReference>
<dbReference type="NCBIfam" id="NF003197">
    <property type="entry name" value="PRK04169.1-1"/>
    <property type="match status" value="1"/>
</dbReference>
<dbReference type="NCBIfam" id="NF003199">
    <property type="entry name" value="PRK04169.1-3"/>
    <property type="match status" value="1"/>
</dbReference>
<dbReference type="NCBIfam" id="NF003200">
    <property type="entry name" value="PRK04169.1-4"/>
    <property type="match status" value="1"/>
</dbReference>
<dbReference type="PANTHER" id="PTHR40029">
    <property type="match status" value="1"/>
</dbReference>
<dbReference type="PANTHER" id="PTHR40029:SF2">
    <property type="entry name" value="HEPTAPRENYLGLYCERYL PHOSPHATE SYNTHASE"/>
    <property type="match status" value="1"/>
</dbReference>
<dbReference type="Pfam" id="PF01884">
    <property type="entry name" value="PcrB"/>
    <property type="match status" value="1"/>
</dbReference>
<dbReference type="SUPFAM" id="SSF51395">
    <property type="entry name" value="FMN-linked oxidoreductases"/>
    <property type="match status" value="1"/>
</dbReference>
<feature type="chain" id="PRO_0000231307" description="Heptaprenylglyceryl phosphate synthase">
    <location>
        <begin position="1"/>
        <end position="229"/>
    </location>
</feature>
<feature type="binding site" evidence="1">
    <location>
        <position position="12"/>
    </location>
    <ligand>
        <name>sn-glycerol 1-phosphate</name>
        <dbReference type="ChEBI" id="CHEBI:57685"/>
    </ligand>
</feature>
<feature type="binding site" evidence="1">
    <location>
        <position position="14"/>
    </location>
    <ligand>
        <name>Mg(2+)</name>
        <dbReference type="ChEBI" id="CHEBI:18420"/>
    </ligand>
</feature>
<feature type="binding site" evidence="1">
    <location>
        <position position="40"/>
    </location>
    <ligand>
        <name>Mg(2+)</name>
        <dbReference type="ChEBI" id="CHEBI:18420"/>
    </ligand>
</feature>
<feature type="binding site" evidence="1">
    <location>
        <begin position="159"/>
        <end position="164"/>
    </location>
    <ligand>
        <name>sn-glycerol 1-phosphate</name>
        <dbReference type="ChEBI" id="CHEBI:57685"/>
    </ligand>
</feature>
<feature type="binding site" evidence="1">
    <location>
        <position position="189"/>
    </location>
    <ligand>
        <name>sn-glycerol 1-phosphate</name>
        <dbReference type="ChEBI" id="CHEBI:57685"/>
    </ligand>
</feature>
<feature type="binding site" evidence="1">
    <location>
        <begin position="209"/>
        <end position="210"/>
    </location>
    <ligand>
        <name>sn-glycerol 1-phosphate</name>
        <dbReference type="ChEBI" id="CHEBI:57685"/>
    </ligand>
</feature>
<reference key="1">
    <citation type="journal article" date="2005" name="Proc. Natl. Acad. Sci. U.S.A.">
        <title>Whole genome sequence of Staphylococcus saprophyticus reveals the pathogenesis of uncomplicated urinary tract infection.</title>
        <authorList>
            <person name="Kuroda M."/>
            <person name="Yamashita A."/>
            <person name="Hirakawa H."/>
            <person name="Kumano M."/>
            <person name="Morikawa K."/>
            <person name="Higashide M."/>
            <person name="Maruyama A."/>
            <person name="Inose Y."/>
            <person name="Matoba K."/>
            <person name="Toh H."/>
            <person name="Kuhara S."/>
            <person name="Hattori M."/>
            <person name="Ohta T."/>
        </authorList>
    </citation>
    <scope>NUCLEOTIDE SEQUENCE [LARGE SCALE GENOMIC DNA]</scope>
    <source>
        <strain>ATCC 15305 / DSM 20229 / NCIMB 8711 / NCTC 7292 / S-41</strain>
    </source>
</reference>